<feature type="chain" id="PRO_1000048842" description="tRNA modification GTPase MnmE">
    <location>
        <begin position="1"/>
        <end position="452"/>
    </location>
</feature>
<feature type="domain" description="TrmE-type G">
    <location>
        <begin position="215"/>
        <end position="374"/>
    </location>
</feature>
<feature type="binding site" evidence="1">
    <location>
        <position position="23"/>
    </location>
    <ligand>
        <name>(6S)-5-formyl-5,6,7,8-tetrahydrofolate</name>
        <dbReference type="ChEBI" id="CHEBI:57457"/>
    </ligand>
</feature>
<feature type="binding site" evidence="1">
    <location>
        <position position="80"/>
    </location>
    <ligand>
        <name>(6S)-5-formyl-5,6,7,8-tetrahydrofolate</name>
        <dbReference type="ChEBI" id="CHEBI:57457"/>
    </ligand>
</feature>
<feature type="binding site" evidence="1">
    <location>
        <position position="119"/>
    </location>
    <ligand>
        <name>(6S)-5-formyl-5,6,7,8-tetrahydrofolate</name>
        <dbReference type="ChEBI" id="CHEBI:57457"/>
    </ligand>
</feature>
<feature type="binding site" evidence="1">
    <location>
        <begin position="225"/>
        <end position="230"/>
    </location>
    <ligand>
        <name>GTP</name>
        <dbReference type="ChEBI" id="CHEBI:37565"/>
    </ligand>
</feature>
<feature type="binding site" evidence="1">
    <location>
        <position position="225"/>
    </location>
    <ligand>
        <name>K(+)</name>
        <dbReference type="ChEBI" id="CHEBI:29103"/>
    </ligand>
</feature>
<feature type="binding site" evidence="1">
    <location>
        <position position="229"/>
    </location>
    <ligand>
        <name>Mg(2+)</name>
        <dbReference type="ChEBI" id="CHEBI:18420"/>
    </ligand>
</feature>
<feature type="binding site" evidence="1">
    <location>
        <begin position="244"/>
        <end position="250"/>
    </location>
    <ligand>
        <name>GTP</name>
        <dbReference type="ChEBI" id="CHEBI:37565"/>
    </ligand>
</feature>
<feature type="binding site" evidence="1">
    <location>
        <position position="244"/>
    </location>
    <ligand>
        <name>K(+)</name>
        <dbReference type="ChEBI" id="CHEBI:29103"/>
    </ligand>
</feature>
<feature type="binding site" evidence="1">
    <location>
        <position position="246"/>
    </location>
    <ligand>
        <name>K(+)</name>
        <dbReference type="ChEBI" id="CHEBI:29103"/>
    </ligand>
</feature>
<feature type="binding site" evidence="1">
    <location>
        <position position="249"/>
    </location>
    <ligand>
        <name>K(+)</name>
        <dbReference type="ChEBI" id="CHEBI:29103"/>
    </ligand>
</feature>
<feature type="binding site" evidence="1">
    <location>
        <position position="250"/>
    </location>
    <ligand>
        <name>Mg(2+)</name>
        <dbReference type="ChEBI" id="CHEBI:18420"/>
    </ligand>
</feature>
<feature type="binding site" evidence="1">
    <location>
        <begin position="269"/>
        <end position="272"/>
    </location>
    <ligand>
        <name>GTP</name>
        <dbReference type="ChEBI" id="CHEBI:37565"/>
    </ligand>
</feature>
<feature type="binding site" evidence="1">
    <location>
        <position position="452"/>
    </location>
    <ligand>
        <name>(6S)-5-formyl-5,6,7,8-tetrahydrofolate</name>
        <dbReference type="ChEBI" id="CHEBI:57457"/>
    </ligand>
</feature>
<reference key="1">
    <citation type="submission" date="2005-08" db="EMBL/GenBank/DDBJ databases">
        <title>Complete sequence of chromosome 1 of Nitrosospira multiformis ATCC 25196.</title>
        <authorList>
            <person name="Copeland A."/>
            <person name="Lucas S."/>
            <person name="Lapidus A."/>
            <person name="Barry K."/>
            <person name="Detter J.C."/>
            <person name="Glavina T."/>
            <person name="Hammon N."/>
            <person name="Israni S."/>
            <person name="Pitluck S."/>
            <person name="Chain P."/>
            <person name="Malfatti S."/>
            <person name="Shin M."/>
            <person name="Vergez L."/>
            <person name="Schmutz J."/>
            <person name="Larimer F."/>
            <person name="Land M."/>
            <person name="Hauser L."/>
            <person name="Kyrpides N."/>
            <person name="Lykidis A."/>
            <person name="Richardson P."/>
        </authorList>
    </citation>
    <scope>NUCLEOTIDE SEQUENCE [LARGE SCALE GENOMIC DNA]</scope>
    <source>
        <strain>ATCC 25196 / NCIMB 11849 / C 71</strain>
    </source>
</reference>
<gene>
    <name evidence="1" type="primary">mnmE</name>
    <name evidence="1" type="synonym">trmE</name>
    <name type="ordered locus">Nmul_A2775</name>
</gene>
<evidence type="ECO:0000255" key="1">
    <source>
        <dbReference type="HAMAP-Rule" id="MF_00379"/>
    </source>
</evidence>
<organism>
    <name type="scientific">Nitrosospira multiformis (strain ATCC 25196 / NCIMB 11849 / C 71)</name>
    <dbReference type="NCBI Taxonomy" id="323848"/>
    <lineage>
        <taxon>Bacteria</taxon>
        <taxon>Pseudomonadati</taxon>
        <taxon>Pseudomonadota</taxon>
        <taxon>Betaproteobacteria</taxon>
        <taxon>Nitrosomonadales</taxon>
        <taxon>Nitrosomonadaceae</taxon>
        <taxon>Nitrosospira</taxon>
    </lineage>
</organism>
<dbReference type="EC" id="3.6.-.-" evidence="1"/>
<dbReference type="EMBL" id="CP000103">
    <property type="protein sequence ID" value="ABB76062.1"/>
    <property type="molecule type" value="Genomic_DNA"/>
</dbReference>
<dbReference type="RefSeq" id="WP_011382047.1">
    <property type="nucleotide sequence ID" value="NC_007614.1"/>
</dbReference>
<dbReference type="SMR" id="Q2Y5A9"/>
<dbReference type="STRING" id="323848.Nmul_A2775"/>
<dbReference type="KEGG" id="nmu:Nmul_A2775"/>
<dbReference type="eggNOG" id="COG0486">
    <property type="taxonomic scope" value="Bacteria"/>
</dbReference>
<dbReference type="HOGENOM" id="CLU_019624_4_1_4"/>
<dbReference type="OrthoDB" id="9805918at2"/>
<dbReference type="Proteomes" id="UP000002718">
    <property type="component" value="Chromosome"/>
</dbReference>
<dbReference type="GO" id="GO:0005829">
    <property type="term" value="C:cytosol"/>
    <property type="evidence" value="ECO:0007669"/>
    <property type="project" value="TreeGrafter"/>
</dbReference>
<dbReference type="GO" id="GO:0005525">
    <property type="term" value="F:GTP binding"/>
    <property type="evidence" value="ECO:0007669"/>
    <property type="project" value="UniProtKB-UniRule"/>
</dbReference>
<dbReference type="GO" id="GO:0003924">
    <property type="term" value="F:GTPase activity"/>
    <property type="evidence" value="ECO:0007669"/>
    <property type="project" value="UniProtKB-UniRule"/>
</dbReference>
<dbReference type="GO" id="GO:0046872">
    <property type="term" value="F:metal ion binding"/>
    <property type="evidence" value="ECO:0007669"/>
    <property type="project" value="UniProtKB-KW"/>
</dbReference>
<dbReference type="GO" id="GO:0030488">
    <property type="term" value="P:tRNA methylation"/>
    <property type="evidence" value="ECO:0007669"/>
    <property type="project" value="TreeGrafter"/>
</dbReference>
<dbReference type="GO" id="GO:0002098">
    <property type="term" value="P:tRNA wobble uridine modification"/>
    <property type="evidence" value="ECO:0007669"/>
    <property type="project" value="TreeGrafter"/>
</dbReference>
<dbReference type="CDD" id="cd04164">
    <property type="entry name" value="trmE"/>
    <property type="match status" value="1"/>
</dbReference>
<dbReference type="CDD" id="cd14858">
    <property type="entry name" value="TrmE_N"/>
    <property type="match status" value="1"/>
</dbReference>
<dbReference type="FunFam" id="3.40.50.300:FF:001376">
    <property type="entry name" value="tRNA modification GTPase MnmE"/>
    <property type="match status" value="1"/>
</dbReference>
<dbReference type="Gene3D" id="3.40.50.300">
    <property type="entry name" value="P-loop containing nucleotide triphosphate hydrolases"/>
    <property type="match status" value="1"/>
</dbReference>
<dbReference type="Gene3D" id="3.30.1360.120">
    <property type="entry name" value="Probable tRNA modification gtpase trme, domain 1"/>
    <property type="match status" value="1"/>
</dbReference>
<dbReference type="Gene3D" id="1.20.120.430">
    <property type="entry name" value="tRNA modification GTPase MnmE domain 2"/>
    <property type="match status" value="1"/>
</dbReference>
<dbReference type="HAMAP" id="MF_00379">
    <property type="entry name" value="GTPase_MnmE"/>
    <property type="match status" value="1"/>
</dbReference>
<dbReference type="InterPro" id="IPR031168">
    <property type="entry name" value="G_TrmE"/>
</dbReference>
<dbReference type="InterPro" id="IPR006073">
    <property type="entry name" value="GTP-bd"/>
</dbReference>
<dbReference type="InterPro" id="IPR018948">
    <property type="entry name" value="GTP-bd_TrmE_N"/>
</dbReference>
<dbReference type="InterPro" id="IPR004520">
    <property type="entry name" value="GTPase_MnmE"/>
</dbReference>
<dbReference type="InterPro" id="IPR027368">
    <property type="entry name" value="MnmE_dom2"/>
</dbReference>
<dbReference type="InterPro" id="IPR025867">
    <property type="entry name" value="MnmE_helical"/>
</dbReference>
<dbReference type="InterPro" id="IPR027417">
    <property type="entry name" value="P-loop_NTPase"/>
</dbReference>
<dbReference type="InterPro" id="IPR005225">
    <property type="entry name" value="Small_GTP-bd"/>
</dbReference>
<dbReference type="InterPro" id="IPR027266">
    <property type="entry name" value="TrmE/GcvT_dom1"/>
</dbReference>
<dbReference type="NCBIfam" id="TIGR00450">
    <property type="entry name" value="mnmE_trmE_thdF"/>
    <property type="match status" value="1"/>
</dbReference>
<dbReference type="NCBIfam" id="NF003661">
    <property type="entry name" value="PRK05291.1-3"/>
    <property type="match status" value="1"/>
</dbReference>
<dbReference type="NCBIfam" id="TIGR00231">
    <property type="entry name" value="small_GTP"/>
    <property type="match status" value="1"/>
</dbReference>
<dbReference type="PANTHER" id="PTHR42714">
    <property type="entry name" value="TRNA MODIFICATION GTPASE GTPBP3"/>
    <property type="match status" value="1"/>
</dbReference>
<dbReference type="PANTHER" id="PTHR42714:SF2">
    <property type="entry name" value="TRNA MODIFICATION GTPASE GTPBP3, MITOCHONDRIAL"/>
    <property type="match status" value="1"/>
</dbReference>
<dbReference type="Pfam" id="PF01926">
    <property type="entry name" value="MMR_HSR1"/>
    <property type="match status" value="1"/>
</dbReference>
<dbReference type="Pfam" id="PF12631">
    <property type="entry name" value="MnmE_helical"/>
    <property type="match status" value="1"/>
</dbReference>
<dbReference type="Pfam" id="PF10396">
    <property type="entry name" value="TrmE_N"/>
    <property type="match status" value="1"/>
</dbReference>
<dbReference type="PRINTS" id="PR00449">
    <property type="entry name" value="RASTRNSFRMNG"/>
</dbReference>
<dbReference type="SUPFAM" id="SSF52540">
    <property type="entry name" value="P-loop containing nucleoside triphosphate hydrolases"/>
    <property type="match status" value="1"/>
</dbReference>
<dbReference type="PROSITE" id="PS51709">
    <property type="entry name" value="G_TRME"/>
    <property type="match status" value="1"/>
</dbReference>
<keyword id="KW-0963">Cytoplasm</keyword>
<keyword id="KW-0342">GTP-binding</keyword>
<keyword id="KW-0378">Hydrolase</keyword>
<keyword id="KW-0460">Magnesium</keyword>
<keyword id="KW-0479">Metal-binding</keyword>
<keyword id="KW-0547">Nucleotide-binding</keyword>
<keyword id="KW-0630">Potassium</keyword>
<keyword id="KW-1185">Reference proteome</keyword>
<keyword id="KW-0819">tRNA processing</keyword>
<protein>
    <recommendedName>
        <fullName evidence="1">tRNA modification GTPase MnmE</fullName>
        <ecNumber evidence="1">3.6.-.-</ecNumber>
    </recommendedName>
</protein>
<name>MNME_NITMU</name>
<comment type="function">
    <text evidence="1">Exhibits a very high intrinsic GTPase hydrolysis rate. Involved in the addition of a carboxymethylaminomethyl (cmnm) group at the wobble position (U34) of certain tRNAs, forming tRNA-cmnm(5)s(2)U34.</text>
</comment>
<comment type="cofactor">
    <cofactor evidence="1">
        <name>K(+)</name>
        <dbReference type="ChEBI" id="CHEBI:29103"/>
    </cofactor>
    <text evidence="1">Binds 1 potassium ion per subunit.</text>
</comment>
<comment type="subunit">
    <text evidence="1">Homodimer. Heterotetramer of two MnmE and two MnmG subunits.</text>
</comment>
<comment type="subcellular location">
    <subcellularLocation>
        <location evidence="1">Cytoplasm</location>
    </subcellularLocation>
</comment>
<comment type="similarity">
    <text evidence="1">Belongs to the TRAFAC class TrmE-Era-EngA-EngB-Septin-like GTPase superfamily. TrmE GTPase family.</text>
</comment>
<proteinExistence type="inferred from homology"/>
<accession>Q2Y5A9</accession>
<sequence length="452" mass="48534">MTRSDVIAAIATPPGRGGIGVVRVSGRNLQSLALKVAGCVPEPRRASLTRFRDENDRVIDQGIALYFPAPQSYTGEEVLELQGHGGPAVMNLLLASCLSAGARLAQPGEFTLRAFLNNKLDLAQAESVADLIDASTEEAARCAIRSLQGEFSNAIHTSVQALTDLRMLVEASLDFSEEEIEFISGRELEFRLEHIRQQLEQVFSAARQGSLLREGIWIALVGQPNVGKSSLLNRLAGEEVALVTEVPGTTRDVIRQVIEIEGVPMHLLDTAGLRETEDAIEKMGMARTRSTIDKASIVLLLVDSRVGITPEDQAILASLPPGLRLIVVHNKTDLLESPPNSTVSTATATADIWVSAKTGAGIGSLQQGLLEMIGWQPSTGEGAFMARQRHLSALTAARTHLEAACALANSLDQVELFAEELRLAQLALSSITGEFSADDLLGEIFSRFCIGK</sequence>